<dbReference type="EMBL" id="CP000384">
    <property type="protein sequence ID" value="ABG08814.1"/>
    <property type="molecule type" value="Genomic_DNA"/>
</dbReference>
<dbReference type="SMR" id="Q1B8H0"/>
<dbReference type="KEGG" id="mmc:Mmcs_2707"/>
<dbReference type="HOGENOM" id="CLU_030805_9_2_11"/>
<dbReference type="BioCyc" id="MSP164756:G1G6O-2761-MONOMER"/>
<dbReference type="CDD" id="cd00885">
    <property type="entry name" value="cinA"/>
    <property type="match status" value="1"/>
</dbReference>
<dbReference type="Gene3D" id="3.90.950.20">
    <property type="entry name" value="CinA-like"/>
    <property type="match status" value="1"/>
</dbReference>
<dbReference type="Gene3D" id="3.40.980.10">
    <property type="entry name" value="MoaB/Mog-like domain"/>
    <property type="match status" value="1"/>
</dbReference>
<dbReference type="HAMAP" id="MF_00226_B">
    <property type="entry name" value="CinA_B"/>
    <property type="match status" value="1"/>
</dbReference>
<dbReference type="InterPro" id="IPR050101">
    <property type="entry name" value="CinA"/>
</dbReference>
<dbReference type="InterPro" id="IPR036653">
    <property type="entry name" value="CinA-like_C"/>
</dbReference>
<dbReference type="InterPro" id="IPR008136">
    <property type="entry name" value="CinA_C"/>
</dbReference>
<dbReference type="InterPro" id="IPR008135">
    <property type="entry name" value="Competence-induced_CinA"/>
</dbReference>
<dbReference type="InterPro" id="IPR036425">
    <property type="entry name" value="MoaB/Mog-like_dom_sf"/>
</dbReference>
<dbReference type="InterPro" id="IPR001453">
    <property type="entry name" value="MoaB/Mog_dom"/>
</dbReference>
<dbReference type="NCBIfam" id="TIGR00200">
    <property type="entry name" value="cinA_nterm"/>
    <property type="match status" value="1"/>
</dbReference>
<dbReference type="NCBIfam" id="TIGR00199">
    <property type="entry name" value="PncC_domain"/>
    <property type="match status" value="1"/>
</dbReference>
<dbReference type="NCBIfam" id="NF001813">
    <property type="entry name" value="PRK00549.1"/>
    <property type="match status" value="1"/>
</dbReference>
<dbReference type="PANTHER" id="PTHR13939">
    <property type="entry name" value="NICOTINAMIDE-NUCLEOTIDE AMIDOHYDROLASE PNCC"/>
    <property type="match status" value="1"/>
</dbReference>
<dbReference type="PANTHER" id="PTHR13939:SF0">
    <property type="entry name" value="NMN AMIDOHYDROLASE-LIKE PROTEIN YFAY"/>
    <property type="match status" value="1"/>
</dbReference>
<dbReference type="Pfam" id="PF02464">
    <property type="entry name" value="CinA"/>
    <property type="match status" value="1"/>
</dbReference>
<dbReference type="Pfam" id="PF00994">
    <property type="entry name" value="MoCF_biosynth"/>
    <property type="match status" value="1"/>
</dbReference>
<dbReference type="PIRSF" id="PIRSF006728">
    <property type="entry name" value="CinA"/>
    <property type="match status" value="1"/>
</dbReference>
<dbReference type="SMART" id="SM00852">
    <property type="entry name" value="MoCF_biosynth"/>
    <property type="match status" value="1"/>
</dbReference>
<dbReference type="SUPFAM" id="SSF142433">
    <property type="entry name" value="CinA-like"/>
    <property type="match status" value="1"/>
</dbReference>
<dbReference type="SUPFAM" id="SSF53218">
    <property type="entry name" value="Molybdenum cofactor biosynthesis proteins"/>
    <property type="match status" value="1"/>
</dbReference>
<organism>
    <name type="scientific">Mycobacterium sp. (strain MCS)</name>
    <dbReference type="NCBI Taxonomy" id="164756"/>
    <lineage>
        <taxon>Bacteria</taxon>
        <taxon>Bacillati</taxon>
        <taxon>Actinomycetota</taxon>
        <taxon>Actinomycetes</taxon>
        <taxon>Mycobacteriales</taxon>
        <taxon>Mycobacteriaceae</taxon>
        <taxon>Mycobacterium</taxon>
    </lineage>
</organism>
<accession>Q1B8H0</accession>
<gene>
    <name type="ordered locus">Mmcs_2707</name>
</gene>
<reference key="1">
    <citation type="submission" date="2006-06" db="EMBL/GenBank/DDBJ databases">
        <title>Complete sequence of chromosome of Mycobacterium sp. MCS.</title>
        <authorList>
            <consortium name="US DOE Joint Genome Institute"/>
            <person name="Copeland A."/>
            <person name="Lucas S."/>
            <person name="Lapidus A."/>
            <person name="Barry K."/>
            <person name="Detter J.C."/>
            <person name="Glavina del Rio T."/>
            <person name="Hammon N."/>
            <person name="Israni S."/>
            <person name="Dalin E."/>
            <person name="Tice H."/>
            <person name="Pitluck S."/>
            <person name="Martinez M."/>
            <person name="Schmutz J."/>
            <person name="Larimer F."/>
            <person name="Land M."/>
            <person name="Hauser L."/>
            <person name="Kyrpides N."/>
            <person name="Kim E."/>
            <person name="Miller C.D."/>
            <person name="Hughes J.E."/>
            <person name="Anderson A.J."/>
            <person name="Sims R.C."/>
            <person name="Richardson P."/>
        </authorList>
    </citation>
    <scope>NUCLEOTIDE SEQUENCE [LARGE SCALE GENOMIC DNA]</scope>
    <source>
        <strain>MCS</strain>
    </source>
</reference>
<feature type="chain" id="PRO_0000336511" description="CinA-like protein">
    <location>
        <begin position="1"/>
        <end position="421"/>
    </location>
</feature>
<evidence type="ECO:0000255" key="1">
    <source>
        <dbReference type="HAMAP-Rule" id="MF_00226"/>
    </source>
</evidence>
<comment type="similarity">
    <text evidence="1">Belongs to the CinA family.</text>
</comment>
<protein>
    <recommendedName>
        <fullName evidence="1">CinA-like protein</fullName>
    </recommendedName>
</protein>
<sequence length="421" mass="44777">MSARAGIVVTGTEVLTGRVQDRNGPWIADRLLELGVELAHITICGDRPADIEAQLRFLAAEGVDLIVTSGGLGPTADDLTVATVARFCGRELILDTELEQRIADILRRLMGRRTDVDFDALRAANRKQAMVPDGATVLEPVGTAPGVVVPGSPTVLVLPGPPRELQPMWRTAVQTEALRSAIAGRTEYRQDMVRMFGLPESGLAETLRDAERDLAGFDRLEITTCLRRGELEIVTRYEPDAEPVYRNLLTLLRDRHGSAIFSEDGSLVDDQVAALLAGHTIATAESCTGGMLSARLTDRAGSSAYVAGAAVCYADAAKVELLGVPADLIADHGAVSEPVAEAMADGALRRFGADVAVAITGIAGPGGGTELKPVGTVCFCVRRADGRVVTRTVRLPGDRSDVRERSTTVAMHLLRRALQDG</sequence>
<proteinExistence type="inferred from homology"/>
<name>CINAL_MYCSS</name>